<proteinExistence type="inferred from homology"/>
<reference key="1">
    <citation type="submission" date="2006-05" db="EMBL/GenBank/DDBJ databases">
        <authorList>
            <consortium name="Genoscope"/>
        </authorList>
    </citation>
    <scope>NUCLEOTIDE SEQUENCE [LARGE SCALE GENOMIC DNA]</scope>
    <source>
        <strain>RCC307</strain>
    </source>
</reference>
<dbReference type="EC" id="1.13.11.54" evidence="1"/>
<dbReference type="EC" id="1.13.11.53" evidence="1"/>
<dbReference type="EMBL" id="CT978603">
    <property type="protein sequence ID" value="CAK27362.1"/>
    <property type="molecule type" value="Genomic_DNA"/>
</dbReference>
<dbReference type="SMR" id="A5GR53"/>
<dbReference type="STRING" id="316278.SynRCC307_0459"/>
<dbReference type="KEGG" id="syr:SynRCC307_0459"/>
<dbReference type="eggNOG" id="COG1791">
    <property type="taxonomic scope" value="Bacteria"/>
</dbReference>
<dbReference type="HOGENOM" id="CLU_125400_0_0_3"/>
<dbReference type="OrthoDB" id="9795636at2"/>
<dbReference type="UniPathway" id="UPA00904">
    <property type="reaction ID" value="UER00878"/>
</dbReference>
<dbReference type="Proteomes" id="UP000001115">
    <property type="component" value="Chromosome"/>
</dbReference>
<dbReference type="GO" id="GO:0010308">
    <property type="term" value="F:acireductone dioxygenase (Ni2+-requiring) activity"/>
    <property type="evidence" value="ECO:0007669"/>
    <property type="project" value="UniProtKB-UniRule"/>
</dbReference>
<dbReference type="GO" id="GO:0010309">
    <property type="term" value="F:acireductone dioxygenase [iron(II)-requiring] activity"/>
    <property type="evidence" value="ECO:0007669"/>
    <property type="project" value="UniProtKB-UniRule"/>
</dbReference>
<dbReference type="GO" id="GO:0005506">
    <property type="term" value="F:iron ion binding"/>
    <property type="evidence" value="ECO:0007669"/>
    <property type="project" value="UniProtKB-UniRule"/>
</dbReference>
<dbReference type="GO" id="GO:0016151">
    <property type="term" value="F:nickel cation binding"/>
    <property type="evidence" value="ECO:0007669"/>
    <property type="project" value="UniProtKB-UniRule"/>
</dbReference>
<dbReference type="GO" id="GO:0019509">
    <property type="term" value="P:L-methionine salvage from methylthioadenosine"/>
    <property type="evidence" value="ECO:0007669"/>
    <property type="project" value="UniProtKB-UniRule"/>
</dbReference>
<dbReference type="GO" id="GO:0019284">
    <property type="term" value="P:L-methionine salvage from S-adenosylmethionine"/>
    <property type="evidence" value="ECO:0007669"/>
    <property type="project" value="InterPro"/>
</dbReference>
<dbReference type="CDD" id="cd02232">
    <property type="entry name" value="cupin_ARD"/>
    <property type="match status" value="1"/>
</dbReference>
<dbReference type="Gene3D" id="2.60.120.10">
    <property type="entry name" value="Jelly Rolls"/>
    <property type="match status" value="1"/>
</dbReference>
<dbReference type="HAMAP" id="MF_01682">
    <property type="entry name" value="Salvage_MtnD"/>
    <property type="match status" value="1"/>
</dbReference>
<dbReference type="InterPro" id="IPR004313">
    <property type="entry name" value="ARD"/>
</dbReference>
<dbReference type="InterPro" id="IPR023956">
    <property type="entry name" value="ARD_bac"/>
</dbReference>
<dbReference type="InterPro" id="IPR014710">
    <property type="entry name" value="RmlC-like_jellyroll"/>
</dbReference>
<dbReference type="InterPro" id="IPR011051">
    <property type="entry name" value="RmlC_Cupin_sf"/>
</dbReference>
<dbReference type="PANTHER" id="PTHR23418">
    <property type="entry name" value="ACIREDUCTONE DIOXYGENASE"/>
    <property type="match status" value="1"/>
</dbReference>
<dbReference type="PANTHER" id="PTHR23418:SF0">
    <property type="entry name" value="ACIREDUCTONE DIOXYGENASE"/>
    <property type="match status" value="1"/>
</dbReference>
<dbReference type="Pfam" id="PF03079">
    <property type="entry name" value="ARD"/>
    <property type="match status" value="1"/>
</dbReference>
<dbReference type="SUPFAM" id="SSF51182">
    <property type="entry name" value="RmlC-like cupins"/>
    <property type="match status" value="1"/>
</dbReference>
<organism>
    <name type="scientific">Synechococcus sp. (strain RCC307)</name>
    <dbReference type="NCBI Taxonomy" id="316278"/>
    <lineage>
        <taxon>Bacteria</taxon>
        <taxon>Bacillati</taxon>
        <taxon>Cyanobacteriota</taxon>
        <taxon>Cyanophyceae</taxon>
        <taxon>Synechococcales</taxon>
        <taxon>Synechococcaceae</taxon>
        <taxon>Synechococcus</taxon>
    </lineage>
</organism>
<name>MTND_SYNR3</name>
<comment type="function">
    <text evidence="1">Catalyzes 2 different reactions between oxygen and the acireductone 1,2-dihydroxy-3-keto-5-methylthiopentene (DHK-MTPene) depending upon the metal bound in the active site. Fe-containing acireductone dioxygenase (Fe-ARD) produces formate and 2-keto-4-methylthiobutyrate (KMTB), the alpha-ketoacid precursor of methionine in the methionine recycle pathway. Ni-containing acireductone dioxygenase (Ni-ARD) produces methylthiopropionate, carbon monoxide and formate, and does not lie on the methionine recycle pathway.</text>
</comment>
<comment type="catalytic activity">
    <reaction evidence="1">
        <text>1,2-dihydroxy-5-(methylsulfanyl)pent-1-en-3-one + O2 = 3-(methylsulfanyl)propanoate + CO + formate + 2 H(+)</text>
        <dbReference type="Rhea" id="RHEA:14161"/>
        <dbReference type="ChEBI" id="CHEBI:15378"/>
        <dbReference type="ChEBI" id="CHEBI:15379"/>
        <dbReference type="ChEBI" id="CHEBI:15740"/>
        <dbReference type="ChEBI" id="CHEBI:17245"/>
        <dbReference type="ChEBI" id="CHEBI:49016"/>
        <dbReference type="ChEBI" id="CHEBI:49252"/>
        <dbReference type="EC" id="1.13.11.53"/>
    </reaction>
</comment>
<comment type="catalytic activity">
    <reaction evidence="1">
        <text>1,2-dihydroxy-5-(methylsulfanyl)pent-1-en-3-one + O2 = 4-methylsulfanyl-2-oxobutanoate + formate + 2 H(+)</text>
        <dbReference type="Rhea" id="RHEA:24504"/>
        <dbReference type="ChEBI" id="CHEBI:15378"/>
        <dbReference type="ChEBI" id="CHEBI:15379"/>
        <dbReference type="ChEBI" id="CHEBI:15740"/>
        <dbReference type="ChEBI" id="CHEBI:16723"/>
        <dbReference type="ChEBI" id="CHEBI:49252"/>
        <dbReference type="EC" id="1.13.11.54"/>
    </reaction>
</comment>
<comment type="cofactor">
    <cofactor evidence="1">
        <name>Fe(2+)</name>
        <dbReference type="ChEBI" id="CHEBI:29033"/>
    </cofactor>
    <text evidence="1">Binds 1 Fe(2+) cation per monomer.</text>
</comment>
<comment type="cofactor">
    <cofactor evidence="1">
        <name>Ni(2+)</name>
        <dbReference type="ChEBI" id="CHEBI:49786"/>
    </cofactor>
    <text evidence="1">Binds 1 nickel ion per monomer.</text>
</comment>
<comment type="pathway">
    <text evidence="1">Amino-acid biosynthesis; L-methionine biosynthesis via salvage pathway; L-methionine from S-methyl-5-thio-alpha-D-ribose 1-phosphate: step 5/6.</text>
</comment>
<comment type="subunit">
    <text evidence="1">Monomer.</text>
</comment>
<comment type="similarity">
    <text evidence="1">Belongs to the acireductone dioxygenase (ARD) family.</text>
</comment>
<accession>A5GR53</accession>
<evidence type="ECO:0000255" key="1">
    <source>
        <dbReference type="HAMAP-Rule" id="MF_01682"/>
    </source>
</evidence>
<keyword id="KW-0028">Amino-acid biosynthesis</keyword>
<keyword id="KW-0223">Dioxygenase</keyword>
<keyword id="KW-0408">Iron</keyword>
<keyword id="KW-0479">Metal-binding</keyword>
<keyword id="KW-0486">Methionine biosynthesis</keyword>
<keyword id="KW-0533">Nickel</keyword>
<keyword id="KW-0560">Oxidoreductase</keyword>
<keyword id="KW-1185">Reference proteome</keyword>
<feature type="chain" id="PRO_0000359242" description="Acireductone dioxygenase">
    <location>
        <begin position="1"/>
        <end position="185"/>
    </location>
</feature>
<feature type="binding site" evidence="1">
    <location>
        <position position="101"/>
    </location>
    <ligand>
        <name>Fe(2+)</name>
        <dbReference type="ChEBI" id="CHEBI:29033"/>
    </ligand>
</feature>
<feature type="binding site" evidence="1">
    <location>
        <position position="101"/>
    </location>
    <ligand>
        <name>Ni(2+)</name>
        <dbReference type="ChEBI" id="CHEBI:49786"/>
    </ligand>
</feature>
<feature type="binding site" evidence="1">
    <location>
        <position position="103"/>
    </location>
    <ligand>
        <name>Fe(2+)</name>
        <dbReference type="ChEBI" id="CHEBI:29033"/>
    </ligand>
</feature>
<feature type="binding site" evidence="1">
    <location>
        <position position="103"/>
    </location>
    <ligand>
        <name>Ni(2+)</name>
        <dbReference type="ChEBI" id="CHEBI:49786"/>
    </ligand>
</feature>
<feature type="binding site" evidence="1">
    <location>
        <position position="107"/>
    </location>
    <ligand>
        <name>Fe(2+)</name>
        <dbReference type="ChEBI" id="CHEBI:29033"/>
    </ligand>
</feature>
<feature type="binding site" evidence="1">
    <location>
        <position position="107"/>
    </location>
    <ligand>
        <name>Ni(2+)</name>
        <dbReference type="ChEBI" id="CHEBI:49786"/>
    </ligand>
</feature>
<feature type="binding site" evidence="1">
    <location>
        <position position="145"/>
    </location>
    <ligand>
        <name>Fe(2+)</name>
        <dbReference type="ChEBI" id="CHEBI:29033"/>
    </ligand>
</feature>
<feature type="binding site" evidence="1">
    <location>
        <position position="145"/>
    </location>
    <ligand>
        <name>Ni(2+)</name>
        <dbReference type="ChEBI" id="CHEBI:49786"/>
    </ligand>
</feature>
<feature type="site" description="May play a role in metal incorporation in vivo" evidence="1">
    <location>
        <position position="100"/>
    </location>
</feature>
<feature type="site" description="May play a role in transmitting local conformational changes" evidence="1">
    <location>
        <position position="106"/>
    </location>
</feature>
<feature type="site" description="Important to generate the dianion" evidence="1">
    <location>
        <position position="109"/>
    </location>
</feature>
<gene>
    <name evidence="1" type="primary">mtnD</name>
    <name type="ordered locus">SynRCC307_0459</name>
</gene>
<sequence length="185" mass="20630">MSQLTIYNAVSEGNDPPLPSLHTTDAAIVAAELSQRGIRFQQWPTHDELDAASSQEEILAAYSAEIAEVQAAGGYQTVDAISLGPDHPQRAELRQKFLSEHTHSEDEVRFFVDGRGLFCLHIGDEVLQVLCERNDWLSVPAGTRHWFDMGERPCFSAIRFFNNQDGWVAQFTGDPIAKRYPLLGS</sequence>
<protein>
    <recommendedName>
        <fullName evidence="1">Acireductone dioxygenase</fullName>
    </recommendedName>
    <alternativeName>
        <fullName evidence="1">1,2-dihydroxy-3-keto-5-methylthiopentene dioxygenase</fullName>
        <shortName evidence="1">DHK-MTPene dioxygenase</shortName>
    </alternativeName>
    <alternativeName>
        <fullName evidence="1">Acireductone dioxygenase (Fe(2+)-requiring)</fullName>
        <shortName evidence="1">ARD'</shortName>
        <shortName evidence="1">Fe-ARD</shortName>
        <ecNumber evidence="1">1.13.11.54</ecNumber>
    </alternativeName>
    <alternativeName>
        <fullName evidence="1">Acireductone dioxygenase (Ni(2+)-requiring)</fullName>
        <shortName evidence="1">ARD</shortName>
        <shortName evidence="1">Ni-ARD</shortName>
        <ecNumber evidence="1">1.13.11.53</ecNumber>
    </alternativeName>
</protein>